<feature type="chain" id="PRO_1000057126" description="LexA repressor">
    <location>
        <begin position="1"/>
        <end position="206"/>
    </location>
</feature>
<feature type="DNA-binding region" description="H-T-H motif" evidence="1">
    <location>
        <begin position="28"/>
        <end position="48"/>
    </location>
</feature>
<feature type="active site" description="For autocatalytic cleavage activity" evidence="1">
    <location>
        <position position="128"/>
    </location>
</feature>
<feature type="active site" description="For autocatalytic cleavage activity" evidence="1">
    <location>
        <position position="166"/>
    </location>
</feature>
<feature type="site" description="Cleavage; by autolysis" evidence="1">
    <location>
        <begin position="92"/>
        <end position="93"/>
    </location>
</feature>
<sequence>MTKLSKRQLDILTFIKEEVKSKGYPPSVREIGEAVGLASSSTVHGHLARLETKGLIRRDPTKPRAIEVLDEEELNIPKSAVMNVPVIGKVTAGLPITAVENVEEYFPLPETFAAPDEQVFMLEIMGESMIDAGILDKDYVIVRQQSTANNGDIVVAMTEEDEATVKRFYKEDTHFRLQPENPSMEPIILQNVSILGKVIGVFRNIH</sequence>
<gene>
    <name evidence="1" type="primary">lexA</name>
    <name type="ordered locus">BPUM_1686</name>
</gene>
<protein>
    <recommendedName>
        <fullName evidence="1">LexA repressor</fullName>
        <ecNumber evidence="1">3.4.21.88</ecNumber>
    </recommendedName>
</protein>
<dbReference type="EC" id="3.4.21.88" evidence="1"/>
<dbReference type="EMBL" id="CP000813">
    <property type="protein sequence ID" value="ABV62364.1"/>
    <property type="molecule type" value="Genomic_DNA"/>
</dbReference>
<dbReference type="RefSeq" id="WP_012010096.1">
    <property type="nucleotide sequence ID" value="NZ_VEIS01000012.1"/>
</dbReference>
<dbReference type="SMR" id="A8FDP7"/>
<dbReference type="STRING" id="315750.BPUM_1686"/>
<dbReference type="MEROPS" id="S24.001"/>
<dbReference type="GeneID" id="5620947"/>
<dbReference type="KEGG" id="bpu:BPUM_1686"/>
<dbReference type="eggNOG" id="COG1974">
    <property type="taxonomic scope" value="Bacteria"/>
</dbReference>
<dbReference type="HOGENOM" id="CLU_066192_45_1_9"/>
<dbReference type="OrthoDB" id="9802364at2"/>
<dbReference type="Proteomes" id="UP000001355">
    <property type="component" value="Chromosome"/>
</dbReference>
<dbReference type="GO" id="GO:0003677">
    <property type="term" value="F:DNA binding"/>
    <property type="evidence" value="ECO:0007669"/>
    <property type="project" value="UniProtKB-UniRule"/>
</dbReference>
<dbReference type="GO" id="GO:0004252">
    <property type="term" value="F:serine-type endopeptidase activity"/>
    <property type="evidence" value="ECO:0007669"/>
    <property type="project" value="UniProtKB-UniRule"/>
</dbReference>
<dbReference type="GO" id="GO:0006281">
    <property type="term" value="P:DNA repair"/>
    <property type="evidence" value="ECO:0007669"/>
    <property type="project" value="UniProtKB-UniRule"/>
</dbReference>
<dbReference type="GO" id="GO:0006260">
    <property type="term" value="P:DNA replication"/>
    <property type="evidence" value="ECO:0007669"/>
    <property type="project" value="UniProtKB-UniRule"/>
</dbReference>
<dbReference type="GO" id="GO:0045892">
    <property type="term" value="P:negative regulation of DNA-templated transcription"/>
    <property type="evidence" value="ECO:0007669"/>
    <property type="project" value="UniProtKB-UniRule"/>
</dbReference>
<dbReference type="GO" id="GO:0006508">
    <property type="term" value="P:proteolysis"/>
    <property type="evidence" value="ECO:0007669"/>
    <property type="project" value="InterPro"/>
</dbReference>
<dbReference type="GO" id="GO:0009432">
    <property type="term" value="P:SOS response"/>
    <property type="evidence" value="ECO:0007669"/>
    <property type="project" value="UniProtKB-UniRule"/>
</dbReference>
<dbReference type="CDD" id="cd00090">
    <property type="entry name" value="HTH_ARSR"/>
    <property type="match status" value="1"/>
</dbReference>
<dbReference type="CDD" id="cd06529">
    <property type="entry name" value="S24_LexA-like"/>
    <property type="match status" value="1"/>
</dbReference>
<dbReference type="FunFam" id="1.10.10.10:FF:000009">
    <property type="entry name" value="LexA repressor"/>
    <property type="match status" value="1"/>
</dbReference>
<dbReference type="FunFam" id="2.10.109.10:FF:000001">
    <property type="entry name" value="LexA repressor"/>
    <property type="match status" value="1"/>
</dbReference>
<dbReference type="Gene3D" id="2.10.109.10">
    <property type="entry name" value="Umud Fragment, subunit A"/>
    <property type="match status" value="1"/>
</dbReference>
<dbReference type="Gene3D" id="1.10.10.10">
    <property type="entry name" value="Winged helix-like DNA-binding domain superfamily/Winged helix DNA-binding domain"/>
    <property type="match status" value="1"/>
</dbReference>
<dbReference type="HAMAP" id="MF_00015">
    <property type="entry name" value="LexA"/>
    <property type="match status" value="1"/>
</dbReference>
<dbReference type="InterPro" id="IPR011991">
    <property type="entry name" value="ArsR-like_HTH"/>
</dbReference>
<dbReference type="InterPro" id="IPR006200">
    <property type="entry name" value="LexA"/>
</dbReference>
<dbReference type="InterPro" id="IPR039418">
    <property type="entry name" value="LexA-like"/>
</dbReference>
<dbReference type="InterPro" id="IPR036286">
    <property type="entry name" value="LexA/Signal_pep-like_sf"/>
</dbReference>
<dbReference type="InterPro" id="IPR006199">
    <property type="entry name" value="LexA_DNA-bd_dom"/>
</dbReference>
<dbReference type="InterPro" id="IPR050077">
    <property type="entry name" value="LexA_repressor"/>
</dbReference>
<dbReference type="InterPro" id="IPR006197">
    <property type="entry name" value="Peptidase_S24_LexA"/>
</dbReference>
<dbReference type="InterPro" id="IPR015927">
    <property type="entry name" value="Peptidase_S24_S26A/B/C"/>
</dbReference>
<dbReference type="InterPro" id="IPR036388">
    <property type="entry name" value="WH-like_DNA-bd_sf"/>
</dbReference>
<dbReference type="InterPro" id="IPR036390">
    <property type="entry name" value="WH_DNA-bd_sf"/>
</dbReference>
<dbReference type="NCBIfam" id="TIGR00498">
    <property type="entry name" value="lexA"/>
    <property type="match status" value="1"/>
</dbReference>
<dbReference type="PANTHER" id="PTHR33516">
    <property type="entry name" value="LEXA REPRESSOR"/>
    <property type="match status" value="1"/>
</dbReference>
<dbReference type="PANTHER" id="PTHR33516:SF2">
    <property type="entry name" value="LEXA REPRESSOR-RELATED"/>
    <property type="match status" value="1"/>
</dbReference>
<dbReference type="Pfam" id="PF01726">
    <property type="entry name" value="LexA_DNA_bind"/>
    <property type="match status" value="1"/>
</dbReference>
<dbReference type="Pfam" id="PF00717">
    <property type="entry name" value="Peptidase_S24"/>
    <property type="match status" value="1"/>
</dbReference>
<dbReference type="PRINTS" id="PR00726">
    <property type="entry name" value="LEXASERPTASE"/>
</dbReference>
<dbReference type="SUPFAM" id="SSF51306">
    <property type="entry name" value="LexA/Signal peptidase"/>
    <property type="match status" value="1"/>
</dbReference>
<dbReference type="SUPFAM" id="SSF46785">
    <property type="entry name" value="Winged helix' DNA-binding domain"/>
    <property type="match status" value="1"/>
</dbReference>
<accession>A8FDP7</accession>
<evidence type="ECO:0000255" key="1">
    <source>
        <dbReference type="HAMAP-Rule" id="MF_00015"/>
    </source>
</evidence>
<comment type="function">
    <text evidence="1">Represses a number of genes involved in the response to DNA damage (SOS response), including recA and lexA. In the presence of single-stranded DNA, RecA interacts with LexA causing an autocatalytic cleavage which disrupts the DNA-binding part of LexA, leading to derepression of the SOS regulon and eventually DNA repair.</text>
</comment>
<comment type="catalytic activity">
    <reaction evidence="1">
        <text>Hydrolysis of Ala-|-Gly bond in repressor LexA.</text>
        <dbReference type="EC" id="3.4.21.88"/>
    </reaction>
</comment>
<comment type="subunit">
    <text evidence="1">Homodimer.</text>
</comment>
<comment type="similarity">
    <text evidence="1">Belongs to the peptidase S24 family.</text>
</comment>
<name>LEXA_BACP2</name>
<organism>
    <name type="scientific">Bacillus pumilus (strain SAFR-032)</name>
    <dbReference type="NCBI Taxonomy" id="315750"/>
    <lineage>
        <taxon>Bacteria</taxon>
        <taxon>Bacillati</taxon>
        <taxon>Bacillota</taxon>
        <taxon>Bacilli</taxon>
        <taxon>Bacillales</taxon>
        <taxon>Bacillaceae</taxon>
        <taxon>Bacillus</taxon>
    </lineage>
</organism>
<keyword id="KW-0068">Autocatalytic cleavage</keyword>
<keyword id="KW-0227">DNA damage</keyword>
<keyword id="KW-0234">DNA repair</keyword>
<keyword id="KW-0235">DNA replication</keyword>
<keyword id="KW-0238">DNA-binding</keyword>
<keyword id="KW-0378">Hydrolase</keyword>
<keyword id="KW-0678">Repressor</keyword>
<keyword id="KW-0742">SOS response</keyword>
<keyword id="KW-0804">Transcription</keyword>
<keyword id="KW-0805">Transcription regulation</keyword>
<reference key="1">
    <citation type="journal article" date="2007" name="PLoS ONE">
        <title>Paradoxical DNA repair and peroxide resistance gene conservation in Bacillus pumilus SAFR-032.</title>
        <authorList>
            <person name="Gioia J."/>
            <person name="Yerrapragada S."/>
            <person name="Qin X."/>
            <person name="Jiang H."/>
            <person name="Igboeli O.C."/>
            <person name="Muzny D."/>
            <person name="Dugan-Rocha S."/>
            <person name="Ding Y."/>
            <person name="Hawes A."/>
            <person name="Liu W."/>
            <person name="Perez L."/>
            <person name="Kovar C."/>
            <person name="Dinh H."/>
            <person name="Lee S."/>
            <person name="Nazareth L."/>
            <person name="Blyth P."/>
            <person name="Holder M."/>
            <person name="Buhay C."/>
            <person name="Tirumalai M.R."/>
            <person name="Liu Y."/>
            <person name="Dasgupta I."/>
            <person name="Bokhetache L."/>
            <person name="Fujita M."/>
            <person name="Karouia F."/>
            <person name="Eswara Moorthy P."/>
            <person name="Siefert J."/>
            <person name="Uzman A."/>
            <person name="Buzumbo P."/>
            <person name="Verma A."/>
            <person name="Zwiya H."/>
            <person name="McWilliams B.D."/>
            <person name="Olowu A."/>
            <person name="Clinkenbeard K.D."/>
            <person name="Newcombe D."/>
            <person name="Golebiewski L."/>
            <person name="Petrosino J.F."/>
            <person name="Nicholson W.L."/>
            <person name="Fox G.E."/>
            <person name="Venkateswaran K."/>
            <person name="Highlander S.K."/>
            <person name="Weinstock G.M."/>
        </authorList>
    </citation>
    <scope>NUCLEOTIDE SEQUENCE [LARGE SCALE GENOMIC DNA]</scope>
    <source>
        <strain>SAFR-032</strain>
    </source>
</reference>
<proteinExistence type="inferred from homology"/>